<gene>
    <name evidence="1" type="primary">pgk</name>
    <name type="ordered locus">HY04AAS1_0739</name>
</gene>
<protein>
    <recommendedName>
        <fullName evidence="1">Phosphoglycerate kinase</fullName>
        <ecNumber evidence="1">2.7.2.3</ecNumber>
    </recommendedName>
</protein>
<sequence>MPNKKTIRDIDLKGKRVLVRVDFNVPIDNQGNIEDDARIRAAIPTIEYLLDAKAIVILMSHLGRPKGFDEKYSLKPVAKRLSRYIHKDVVMAPDCIGKDMENIVKNAKSEDVIMLENLRFHKEEEECDEEFSKKLASLGEVYVSDAFGTCHRKHASVYCVPQILKPACMGFLLEKELLYFEKAMVNPQRPVVAFLGGAKVSSKLNVIKNLLKRVDKMFIGGAMAFTFIKAMRYDTGKSLVENDLIDVAKDIIDISKKLGVKFYLPVDFIVGKELSDNTPIKTVLWQEIPQDYMGLDIGPVSISLAKELIGTAQTIVWNGPMGAFEYERFKDGTLEVARAIAHSQALSIAGGGDTDHAIIRAGVINAIDFVSTGGGAFLELLEGKELPCISVLDDK</sequence>
<comment type="catalytic activity">
    <reaction evidence="1">
        <text>(2R)-3-phosphoglycerate + ATP = (2R)-3-phospho-glyceroyl phosphate + ADP</text>
        <dbReference type="Rhea" id="RHEA:14801"/>
        <dbReference type="ChEBI" id="CHEBI:30616"/>
        <dbReference type="ChEBI" id="CHEBI:57604"/>
        <dbReference type="ChEBI" id="CHEBI:58272"/>
        <dbReference type="ChEBI" id="CHEBI:456216"/>
        <dbReference type="EC" id="2.7.2.3"/>
    </reaction>
</comment>
<comment type="pathway">
    <text evidence="1">Carbohydrate degradation; glycolysis; pyruvate from D-glyceraldehyde 3-phosphate: step 2/5.</text>
</comment>
<comment type="subunit">
    <text evidence="1">Monomer.</text>
</comment>
<comment type="subcellular location">
    <subcellularLocation>
        <location evidence="1">Cytoplasm</location>
    </subcellularLocation>
</comment>
<comment type="similarity">
    <text evidence="1">Belongs to the phosphoglycerate kinase family.</text>
</comment>
<keyword id="KW-0067">ATP-binding</keyword>
<keyword id="KW-0963">Cytoplasm</keyword>
<keyword id="KW-0324">Glycolysis</keyword>
<keyword id="KW-0418">Kinase</keyword>
<keyword id="KW-0547">Nucleotide-binding</keyword>
<keyword id="KW-0808">Transferase</keyword>
<evidence type="ECO:0000255" key="1">
    <source>
        <dbReference type="HAMAP-Rule" id="MF_00145"/>
    </source>
</evidence>
<reference key="1">
    <citation type="journal article" date="2009" name="J. Bacteriol.">
        <title>Complete and draft genome sequences of six members of the Aquificales.</title>
        <authorList>
            <person name="Reysenbach A.-L."/>
            <person name="Hamamura N."/>
            <person name="Podar M."/>
            <person name="Griffiths E."/>
            <person name="Ferreira S."/>
            <person name="Hochstein R."/>
            <person name="Heidelberg J."/>
            <person name="Johnson J."/>
            <person name="Mead D."/>
            <person name="Pohorille A."/>
            <person name="Sarmiento M."/>
            <person name="Schweighofer K."/>
            <person name="Seshadri R."/>
            <person name="Voytek M.A."/>
        </authorList>
    </citation>
    <scope>NUCLEOTIDE SEQUENCE [LARGE SCALE GENOMIC DNA]</scope>
    <source>
        <strain>Y04AAS1</strain>
    </source>
</reference>
<name>PGK_HYDS0</name>
<dbReference type="EC" id="2.7.2.3" evidence="1"/>
<dbReference type="EMBL" id="CP001130">
    <property type="protein sequence ID" value="ACG57426.1"/>
    <property type="molecule type" value="Genomic_DNA"/>
</dbReference>
<dbReference type="RefSeq" id="WP_012513782.1">
    <property type="nucleotide sequence ID" value="NC_011126.1"/>
</dbReference>
<dbReference type="SMR" id="B4U8G5"/>
<dbReference type="STRING" id="380749.HY04AAS1_0739"/>
<dbReference type="KEGG" id="hya:HY04AAS1_0739"/>
<dbReference type="eggNOG" id="COG0126">
    <property type="taxonomic scope" value="Bacteria"/>
</dbReference>
<dbReference type="HOGENOM" id="CLU_025427_0_2_0"/>
<dbReference type="OrthoDB" id="9808460at2"/>
<dbReference type="UniPathway" id="UPA00109">
    <property type="reaction ID" value="UER00185"/>
</dbReference>
<dbReference type="GO" id="GO:0005829">
    <property type="term" value="C:cytosol"/>
    <property type="evidence" value="ECO:0007669"/>
    <property type="project" value="TreeGrafter"/>
</dbReference>
<dbReference type="GO" id="GO:0043531">
    <property type="term" value="F:ADP binding"/>
    <property type="evidence" value="ECO:0007669"/>
    <property type="project" value="TreeGrafter"/>
</dbReference>
<dbReference type="GO" id="GO:0005524">
    <property type="term" value="F:ATP binding"/>
    <property type="evidence" value="ECO:0007669"/>
    <property type="project" value="UniProtKB-KW"/>
</dbReference>
<dbReference type="GO" id="GO:0004618">
    <property type="term" value="F:phosphoglycerate kinase activity"/>
    <property type="evidence" value="ECO:0007669"/>
    <property type="project" value="UniProtKB-UniRule"/>
</dbReference>
<dbReference type="GO" id="GO:0006094">
    <property type="term" value="P:gluconeogenesis"/>
    <property type="evidence" value="ECO:0007669"/>
    <property type="project" value="TreeGrafter"/>
</dbReference>
<dbReference type="GO" id="GO:0006096">
    <property type="term" value="P:glycolytic process"/>
    <property type="evidence" value="ECO:0007669"/>
    <property type="project" value="UniProtKB-UniRule"/>
</dbReference>
<dbReference type="FunFam" id="3.40.50.1260:FF:000006">
    <property type="entry name" value="Phosphoglycerate kinase"/>
    <property type="match status" value="1"/>
</dbReference>
<dbReference type="FunFam" id="3.40.50.1260:FF:000031">
    <property type="entry name" value="Phosphoglycerate kinase 1"/>
    <property type="match status" value="1"/>
</dbReference>
<dbReference type="Gene3D" id="3.40.50.1260">
    <property type="entry name" value="Phosphoglycerate kinase, N-terminal domain"/>
    <property type="match status" value="2"/>
</dbReference>
<dbReference type="HAMAP" id="MF_00145">
    <property type="entry name" value="Phosphoglyc_kinase"/>
    <property type="match status" value="1"/>
</dbReference>
<dbReference type="InterPro" id="IPR001576">
    <property type="entry name" value="Phosphoglycerate_kinase"/>
</dbReference>
<dbReference type="InterPro" id="IPR015911">
    <property type="entry name" value="Phosphoglycerate_kinase_CS"/>
</dbReference>
<dbReference type="InterPro" id="IPR015824">
    <property type="entry name" value="Phosphoglycerate_kinase_N"/>
</dbReference>
<dbReference type="InterPro" id="IPR036043">
    <property type="entry name" value="Phosphoglycerate_kinase_sf"/>
</dbReference>
<dbReference type="PANTHER" id="PTHR11406">
    <property type="entry name" value="PHOSPHOGLYCERATE KINASE"/>
    <property type="match status" value="1"/>
</dbReference>
<dbReference type="PANTHER" id="PTHR11406:SF23">
    <property type="entry name" value="PHOSPHOGLYCERATE KINASE 1, CHLOROPLASTIC-RELATED"/>
    <property type="match status" value="1"/>
</dbReference>
<dbReference type="Pfam" id="PF00162">
    <property type="entry name" value="PGK"/>
    <property type="match status" value="1"/>
</dbReference>
<dbReference type="PIRSF" id="PIRSF000724">
    <property type="entry name" value="Pgk"/>
    <property type="match status" value="1"/>
</dbReference>
<dbReference type="PRINTS" id="PR00477">
    <property type="entry name" value="PHGLYCKINASE"/>
</dbReference>
<dbReference type="SUPFAM" id="SSF53748">
    <property type="entry name" value="Phosphoglycerate kinase"/>
    <property type="match status" value="1"/>
</dbReference>
<dbReference type="PROSITE" id="PS00111">
    <property type="entry name" value="PGLYCERATE_KINASE"/>
    <property type="match status" value="1"/>
</dbReference>
<feature type="chain" id="PRO_1000192834" description="Phosphoglycerate kinase">
    <location>
        <begin position="1"/>
        <end position="395"/>
    </location>
</feature>
<feature type="binding site" evidence="1">
    <location>
        <begin position="22"/>
        <end position="24"/>
    </location>
    <ligand>
        <name>substrate</name>
    </ligand>
</feature>
<feature type="binding site" evidence="1">
    <location>
        <position position="38"/>
    </location>
    <ligand>
        <name>substrate</name>
    </ligand>
</feature>
<feature type="binding site" evidence="1">
    <location>
        <begin position="61"/>
        <end position="64"/>
    </location>
    <ligand>
        <name>substrate</name>
    </ligand>
</feature>
<feature type="binding site" evidence="1">
    <location>
        <position position="119"/>
    </location>
    <ligand>
        <name>substrate</name>
    </ligand>
</feature>
<feature type="binding site" evidence="1">
    <location>
        <position position="152"/>
    </location>
    <ligand>
        <name>substrate</name>
    </ligand>
</feature>
<feature type="binding site" evidence="1">
    <location>
        <position position="203"/>
    </location>
    <ligand>
        <name>ATP</name>
        <dbReference type="ChEBI" id="CHEBI:30616"/>
    </ligand>
</feature>
<feature type="binding site" evidence="1">
    <location>
        <position position="294"/>
    </location>
    <ligand>
        <name>ATP</name>
        <dbReference type="ChEBI" id="CHEBI:30616"/>
    </ligand>
</feature>
<feature type="binding site" evidence="1">
    <location>
        <position position="325"/>
    </location>
    <ligand>
        <name>ATP</name>
        <dbReference type="ChEBI" id="CHEBI:30616"/>
    </ligand>
</feature>
<feature type="binding site" evidence="1">
    <location>
        <begin position="351"/>
        <end position="354"/>
    </location>
    <ligand>
        <name>ATP</name>
        <dbReference type="ChEBI" id="CHEBI:30616"/>
    </ligand>
</feature>
<organism>
    <name type="scientific">Hydrogenobaculum sp. (strain Y04AAS1)</name>
    <dbReference type="NCBI Taxonomy" id="380749"/>
    <lineage>
        <taxon>Bacteria</taxon>
        <taxon>Pseudomonadati</taxon>
        <taxon>Aquificota</taxon>
        <taxon>Aquificia</taxon>
        <taxon>Aquificales</taxon>
        <taxon>Aquificaceae</taxon>
        <taxon>Hydrogenobaculum</taxon>
    </lineage>
</organism>
<proteinExistence type="inferred from homology"/>
<accession>B4U8G5</accession>